<sequence>MSKSNQKIASIEQLSNNEGIISALAFDQRGALKRMMAKHQTEEPTVAQIEQLKVLVAEELTQYASSILLDPEYGLPASDARNKDCGLLLAYEKTGYDVNAKGRLPDCLVEWSAKRLKEQGANAVKFLLYYDVDDAEEINIQKKAYIERIGSECVAEDIPFFLEVLTYDDNIPDNGSVEFAKVKPRKVNEAMKLFSEPRFNVDVLKVEVPVNMKYVEGFAEGEVVYTKEEAAQHFKDQDAATHLPYIYLSAGVSAELFQETLKFAHEAGAKFNGVLCGRATWSGAVQVYIEQGEDAAREWLRTTGFKNIDDLNKVLKDTATSWKQRK</sequence>
<comment type="catalytic activity">
    <reaction>
        <text>D-tagatofuranose 1,6-bisphosphate = D-glyceraldehyde 3-phosphate + dihydroxyacetone phosphate</text>
        <dbReference type="Rhea" id="RHEA:22948"/>
        <dbReference type="ChEBI" id="CHEBI:57642"/>
        <dbReference type="ChEBI" id="CHEBI:58694"/>
        <dbReference type="ChEBI" id="CHEBI:59776"/>
        <dbReference type="EC" id="4.1.2.40"/>
    </reaction>
</comment>
<comment type="pathway">
    <text>Carbohydrate metabolism; D-tagatose 6-phosphate degradation; D-glyceraldehyde 3-phosphate and glycerone phosphate from D-tagatose 6-phosphate: step 2/2.</text>
</comment>
<comment type="similarity">
    <text evidence="1">Belongs to the aldolase LacD family.</text>
</comment>
<reference key="1">
    <citation type="journal article" date="2001" name="Lancet">
        <title>Whole genome sequencing of meticillin-resistant Staphylococcus aureus.</title>
        <authorList>
            <person name="Kuroda M."/>
            <person name="Ohta T."/>
            <person name="Uchiyama I."/>
            <person name="Baba T."/>
            <person name="Yuzawa H."/>
            <person name="Kobayashi I."/>
            <person name="Cui L."/>
            <person name="Oguchi A."/>
            <person name="Aoki K."/>
            <person name="Nagai Y."/>
            <person name="Lian J.-Q."/>
            <person name="Ito T."/>
            <person name="Kanamori M."/>
            <person name="Matsumaru H."/>
            <person name="Maruyama A."/>
            <person name="Murakami H."/>
            <person name="Hosoyama A."/>
            <person name="Mizutani-Ui Y."/>
            <person name="Takahashi N.K."/>
            <person name="Sawano T."/>
            <person name="Inoue R."/>
            <person name="Kaito C."/>
            <person name="Sekimizu K."/>
            <person name="Hirakawa H."/>
            <person name="Kuhara S."/>
            <person name="Goto S."/>
            <person name="Yabuzaki J."/>
            <person name="Kanehisa M."/>
            <person name="Yamashita A."/>
            <person name="Oshima K."/>
            <person name="Furuya K."/>
            <person name="Yoshino C."/>
            <person name="Shiba T."/>
            <person name="Hattori M."/>
            <person name="Ogasawara N."/>
            <person name="Hayashi H."/>
            <person name="Hiramatsu K."/>
        </authorList>
    </citation>
    <scope>NUCLEOTIDE SEQUENCE [LARGE SCALE GENOMIC DNA]</scope>
    <source>
        <strain>N315</strain>
    </source>
</reference>
<reference key="2">
    <citation type="submission" date="2007-10" db="UniProtKB">
        <title>Shotgun proteomic analysis of total and membrane protein extracts of S. aureus strain N315.</title>
        <authorList>
            <person name="Vaezzadeh A.R."/>
            <person name="Deshusses J."/>
            <person name="Lescuyer P."/>
            <person name="Hochstrasser D.F."/>
        </authorList>
    </citation>
    <scope>IDENTIFICATION BY MASS SPECTROMETRY [LARGE SCALE ANALYSIS]</scope>
    <source>
        <strain>N315</strain>
    </source>
</reference>
<feature type="chain" id="PRO_0000203946" description="Tagatose 1,6-diphosphate aldolase">
    <location>
        <begin position="1"/>
        <end position="326"/>
    </location>
</feature>
<dbReference type="EC" id="4.1.2.40"/>
<dbReference type="EMBL" id="BA000018">
    <property type="protein sequence ID" value="BAB43284.1"/>
    <property type="molecule type" value="Genomic_DNA"/>
</dbReference>
<dbReference type="RefSeq" id="WP_000047009.1">
    <property type="nucleotide sequence ID" value="NC_002745.2"/>
</dbReference>
<dbReference type="SMR" id="P0A010"/>
<dbReference type="EnsemblBacteria" id="BAB43284">
    <property type="protein sequence ID" value="BAB43284"/>
    <property type="gene ID" value="BAB43284"/>
</dbReference>
<dbReference type="KEGG" id="sau:SA1994"/>
<dbReference type="HOGENOM" id="CLU_058971_0_1_9"/>
<dbReference type="BioCyc" id="MetaCyc:MONOMER-2744"/>
<dbReference type="UniPathway" id="UPA00704">
    <property type="reaction ID" value="UER00716"/>
</dbReference>
<dbReference type="GO" id="GO:0061595">
    <property type="term" value="F:6-deoxy-6-sulfofructose-1-phosphate aldolase activity"/>
    <property type="evidence" value="ECO:0007669"/>
    <property type="project" value="TreeGrafter"/>
</dbReference>
<dbReference type="GO" id="GO:0009024">
    <property type="term" value="F:tagatose-6-phosphate kinase activity"/>
    <property type="evidence" value="ECO:0007669"/>
    <property type="project" value="InterPro"/>
</dbReference>
<dbReference type="GO" id="GO:0009025">
    <property type="term" value="F:tagatose-bisphosphate aldolase activity"/>
    <property type="evidence" value="ECO:0007669"/>
    <property type="project" value="UniProtKB-UniRule"/>
</dbReference>
<dbReference type="GO" id="GO:1902777">
    <property type="term" value="P:6-sulfoquinovose(1-) catabolic process"/>
    <property type="evidence" value="ECO:0007669"/>
    <property type="project" value="TreeGrafter"/>
</dbReference>
<dbReference type="GO" id="GO:2001059">
    <property type="term" value="P:D-tagatose 6-phosphate catabolic process"/>
    <property type="evidence" value="ECO:0007669"/>
    <property type="project" value="UniProtKB-UniRule"/>
</dbReference>
<dbReference type="GO" id="GO:0019512">
    <property type="term" value="P:lactose catabolic process via tagatose-6-phosphate"/>
    <property type="evidence" value="ECO:0007669"/>
    <property type="project" value="InterPro"/>
</dbReference>
<dbReference type="FunFam" id="3.20.20.70:FF:000137">
    <property type="entry name" value="Tagatose 1,6-diphosphate aldolase 2"/>
    <property type="match status" value="1"/>
</dbReference>
<dbReference type="Gene3D" id="3.20.20.70">
    <property type="entry name" value="Aldolase class I"/>
    <property type="match status" value="1"/>
</dbReference>
<dbReference type="HAMAP" id="MF_00734">
    <property type="entry name" value="LacD"/>
    <property type="match status" value="1"/>
</dbReference>
<dbReference type="InterPro" id="IPR013785">
    <property type="entry name" value="Aldolase_TIM"/>
</dbReference>
<dbReference type="InterPro" id="IPR002915">
    <property type="entry name" value="DeoC/FbaB/LacD_aldolase"/>
</dbReference>
<dbReference type="InterPro" id="IPR050552">
    <property type="entry name" value="LacD_aldolase"/>
</dbReference>
<dbReference type="InterPro" id="IPR005927">
    <property type="entry name" value="Tag_1.6-dipho_adolase"/>
</dbReference>
<dbReference type="NCBIfam" id="TIGR01232">
    <property type="entry name" value="lacD"/>
    <property type="match status" value="1"/>
</dbReference>
<dbReference type="NCBIfam" id="NF003180">
    <property type="entry name" value="PRK04161.1"/>
    <property type="match status" value="1"/>
</dbReference>
<dbReference type="NCBIfam" id="NF009065">
    <property type="entry name" value="PRK12399.1"/>
    <property type="match status" value="1"/>
</dbReference>
<dbReference type="NCBIfam" id="NF009498">
    <property type="entry name" value="PRK12858.1"/>
    <property type="match status" value="1"/>
</dbReference>
<dbReference type="PANTHER" id="PTHR39340">
    <property type="entry name" value="SULFOFRUCTOSEPHOSPHATE ALDOLASE"/>
    <property type="match status" value="1"/>
</dbReference>
<dbReference type="PANTHER" id="PTHR39340:SF1">
    <property type="entry name" value="SULFOFRUCTOSEPHOSPHATE ALDOLASE"/>
    <property type="match status" value="1"/>
</dbReference>
<dbReference type="Pfam" id="PF01791">
    <property type="entry name" value="DeoC"/>
    <property type="match status" value="1"/>
</dbReference>
<dbReference type="SMART" id="SM01133">
    <property type="entry name" value="DeoC"/>
    <property type="match status" value="1"/>
</dbReference>
<dbReference type="SUPFAM" id="SSF51569">
    <property type="entry name" value="Aldolase"/>
    <property type="match status" value="1"/>
</dbReference>
<accession>P0A010</accession>
<accession>P11100</accession>
<evidence type="ECO:0000305" key="1"/>
<proteinExistence type="evidence at protein level"/>
<protein>
    <recommendedName>
        <fullName>Tagatose 1,6-diphosphate aldolase</fullName>
        <ecNumber>4.1.2.40</ecNumber>
    </recommendedName>
    <alternativeName>
        <fullName>D-tagatose-1,6-bisphosphate aldolase</fullName>
    </alternativeName>
    <alternativeName>
        <fullName>Tagatose-bisphosphate aldolase</fullName>
    </alternativeName>
</protein>
<name>LACD_STAAN</name>
<organism>
    <name type="scientific">Staphylococcus aureus (strain N315)</name>
    <dbReference type="NCBI Taxonomy" id="158879"/>
    <lineage>
        <taxon>Bacteria</taxon>
        <taxon>Bacillati</taxon>
        <taxon>Bacillota</taxon>
        <taxon>Bacilli</taxon>
        <taxon>Bacillales</taxon>
        <taxon>Staphylococcaceae</taxon>
        <taxon>Staphylococcus</taxon>
    </lineage>
</organism>
<gene>
    <name type="primary">lacD</name>
    <name type="ordered locus">SA1994</name>
</gene>
<keyword id="KW-0423">Lactose metabolism</keyword>
<keyword id="KW-0456">Lyase</keyword>